<feature type="chain" id="PRO_0000395690" description="Probable catabolite repression protein creC">
    <location>
        <begin position="1"/>
        <end position="591"/>
    </location>
</feature>
<feature type="repeat" description="WD 1">
    <location>
        <begin position="249"/>
        <end position="289"/>
    </location>
</feature>
<feature type="repeat" description="WD 2">
    <location>
        <begin position="330"/>
        <end position="371"/>
    </location>
</feature>
<feature type="repeat" description="WD 3">
    <location>
        <begin position="372"/>
        <end position="411"/>
    </location>
</feature>
<feature type="repeat" description="WD 4">
    <location>
        <begin position="414"/>
        <end position="458"/>
    </location>
</feature>
<feature type="repeat" description="WD 5">
    <location>
        <begin position="530"/>
        <end position="567"/>
    </location>
</feature>
<feature type="region of interest" description="Disordered" evidence="2">
    <location>
        <begin position="477"/>
        <end position="510"/>
    </location>
</feature>
<feature type="compositionally biased region" description="Polar residues" evidence="2">
    <location>
        <begin position="496"/>
        <end position="506"/>
    </location>
</feature>
<dbReference type="EMBL" id="AM270227">
    <property type="protein sequence ID" value="CAK96904.1"/>
    <property type="molecule type" value="Genomic_DNA"/>
</dbReference>
<dbReference type="RefSeq" id="XP_001394276.1">
    <property type="nucleotide sequence ID" value="XM_001394239.2"/>
</dbReference>
<dbReference type="SMR" id="A2QVV2"/>
<dbReference type="EnsemblFungi" id="CAK96904">
    <property type="protein sequence ID" value="CAK96904"/>
    <property type="gene ID" value="An11g02750"/>
</dbReference>
<dbReference type="GeneID" id="4984505"/>
<dbReference type="KEGG" id="ang:An11g02750"/>
<dbReference type="VEuPathDB" id="FungiDB:An11g02750"/>
<dbReference type="HOGENOM" id="CLU_016971_1_1_1"/>
<dbReference type="Proteomes" id="UP000006706">
    <property type="component" value="Chromosome 7R"/>
</dbReference>
<dbReference type="GO" id="GO:0032153">
    <property type="term" value="C:cell division site"/>
    <property type="evidence" value="ECO:0007669"/>
    <property type="project" value="TreeGrafter"/>
</dbReference>
<dbReference type="GO" id="GO:0051286">
    <property type="term" value="C:cell tip"/>
    <property type="evidence" value="ECO:0007669"/>
    <property type="project" value="TreeGrafter"/>
</dbReference>
<dbReference type="GO" id="GO:0005634">
    <property type="term" value="C:nucleus"/>
    <property type="evidence" value="ECO:0007669"/>
    <property type="project" value="TreeGrafter"/>
</dbReference>
<dbReference type="GO" id="GO:0045013">
    <property type="term" value="P:carbon catabolite repression of transcription"/>
    <property type="evidence" value="ECO:0000250"/>
    <property type="project" value="UniProtKB"/>
</dbReference>
<dbReference type="FunFam" id="2.130.10.10:FF:000531">
    <property type="entry name" value="Probable catabolite repression protein creC"/>
    <property type="match status" value="1"/>
</dbReference>
<dbReference type="Gene3D" id="2.130.10.10">
    <property type="entry name" value="YVTN repeat-like/Quinoprotein amine dehydrogenase"/>
    <property type="match status" value="1"/>
</dbReference>
<dbReference type="InterPro" id="IPR015943">
    <property type="entry name" value="WD40/YVTN_repeat-like_dom_sf"/>
</dbReference>
<dbReference type="InterPro" id="IPR036322">
    <property type="entry name" value="WD40_repeat_dom_sf"/>
</dbReference>
<dbReference type="InterPro" id="IPR001680">
    <property type="entry name" value="WD40_rpt"/>
</dbReference>
<dbReference type="InterPro" id="IPR051362">
    <property type="entry name" value="WD_repeat_creC_regulators"/>
</dbReference>
<dbReference type="PANTHER" id="PTHR14107:SF16">
    <property type="entry name" value="AT02583P"/>
    <property type="match status" value="1"/>
</dbReference>
<dbReference type="PANTHER" id="PTHR14107">
    <property type="entry name" value="WD REPEAT PROTEIN"/>
    <property type="match status" value="1"/>
</dbReference>
<dbReference type="Pfam" id="PF00400">
    <property type="entry name" value="WD40"/>
    <property type="match status" value="1"/>
</dbReference>
<dbReference type="SMART" id="SM00320">
    <property type="entry name" value="WD40"/>
    <property type="match status" value="5"/>
</dbReference>
<dbReference type="SUPFAM" id="SSF50978">
    <property type="entry name" value="WD40 repeat-like"/>
    <property type="match status" value="1"/>
</dbReference>
<dbReference type="PROSITE" id="PS50082">
    <property type="entry name" value="WD_REPEATS_2"/>
    <property type="match status" value="1"/>
</dbReference>
<dbReference type="PROSITE" id="PS50294">
    <property type="entry name" value="WD_REPEATS_REGION"/>
    <property type="match status" value="1"/>
</dbReference>
<proteinExistence type="inferred from homology"/>
<sequence>MFVLPPPPPRYTVPVAYAAGASNGMAVPVVETNNIISHPEGGCSLQAGEGTYLLRDDLHLATPPPHPSEAPVMNPNPLATVPAPPTSGVKLSLVSIGSRIKTPTPSVDGVGAASLFGDGNPALAAPPVKEGLKRRKPKNNIIKSSSSFVSRVITHETATKRLNDRNPDGLFAFANINRAFQWLDLSAKQKEEPVTKILFTKAHMISHDINELTKSTSHIDVVMGSSAGDIIWYEPMSQKYARINKNGVVNNSPVTHIKWIPGSENLFMAAHANGQLVVYDKEKEDALFAPELGSPSAETMKSSSGRSPLQILKSVNSRNQKTNPVALWKLANQKITQFAFSPDRRHLAVVLEDGSLRVMDYLKEEVLDIFRSYYGGLICVCWSPDGKYIVTGGQDDLVTIWSLPERKIVARCQGHNSWVSAVAFDPWRCDDRTYRFGSVGDDCRLLLWDFSVGMLHRPRVHQANARQRTSMIVSNTQHLNRHRADSGGNRTRSDSQETADTYNSYDPTVRHPVEPRARTALLPPIMSKIVGEDPICWLGFQEDSIMTSSLEGHIRTWDRPREGINDNYSYSPAISASATGSGRADSMMGSL</sequence>
<organism>
    <name type="scientific">Aspergillus niger (strain ATCC MYA-4892 / CBS 513.88 / FGSC A1513)</name>
    <dbReference type="NCBI Taxonomy" id="425011"/>
    <lineage>
        <taxon>Eukaryota</taxon>
        <taxon>Fungi</taxon>
        <taxon>Dikarya</taxon>
        <taxon>Ascomycota</taxon>
        <taxon>Pezizomycotina</taxon>
        <taxon>Eurotiomycetes</taxon>
        <taxon>Eurotiomycetidae</taxon>
        <taxon>Eurotiales</taxon>
        <taxon>Aspergillaceae</taxon>
        <taxon>Aspergillus</taxon>
        <taxon>Aspergillus subgen. Circumdati</taxon>
    </lineage>
</organism>
<reference key="1">
    <citation type="journal article" date="2007" name="Nat. Biotechnol.">
        <title>Genome sequencing and analysis of the versatile cell factory Aspergillus niger CBS 513.88.</title>
        <authorList>
            <person name="Pel H.J."/>
            <person name="de Winde J.H."/>
            <person name="Archer D.B."/>
            <person name="Dyer P.S."/>
            <person name="Hofmann G."/>
            <person name="Schaap P.J."/>
            <person name="Turner G."/>
            <person name="de Vries R.P."/>
            <person name="Albang R."/>
            <person name="Albermann K."/>
            <person name="Andersen M.R."/>
            <person name="Bendtsen J.D."/>
            <person name="Benen J.A.E."/>
            <person name="van den Berg M."/>
            <person name="Breestraat S."/>
            <person name="Caddick M.X."/>
            <person name="Contreras R."/>
            <person name="Cornell M."/>
            <person name="Coutinho P.M."/>
            <person name="Danchin E.G.J."/>
            <person name="Debets A.J.M."/>
            <person name="Dekker P."/>
            <person name="van Dijck P.W.M."/>
            <person name="van Dijk A."/>
            <person name="Dijkhuizen L."/>
            <person name="Driessen A.J.M."/>
            <person name="d'Enfert C."/>
            <person name="Geysens S."/>
            <person name="Goosen C."/>
            <person name="Groot G.S.P."/>
            <person name="de Groot P.W.J."/>
            <person name="Guillemette T."/>
            <person name="Henrissat B."/>
            <person name="Herweijer M."/>
            <person name="van den Hombergh J.P.T.W."/>
            <person name="van den Hondel C.A.M.J.J."/>
            <person name="van der Heijden R.T.J.M."/>
            <person name="van der Kaaij R.M."/>
            <person name="Klis F.M."/>
            <person name="Kools H.J."/>
            <person name="Kubicek C.P."/>
            <person name="van Kuyk P.A."/>
            <person name="Lauber J."/>
            <person name="Lu X."/>
            <person name="van der Maarel M.J.E.C."/>
            <person name="Meulenberg R."/>
            <person name="Menke H."/>
            <person name="Mortimer M.A."/>
            <person name="Nielsen J."/>
            <person name="Oliver S.G."/>
            <person name="Olsthoorn M."/>
            <person name="Pal K."/>
            <person name="van Peij N.N.M.E."/>
            <person name="Ram A.F.J."/>
            <person name="Rinas U."/>
            <person name="Roubos J.A."/>
            <person name="Sagt C.M.J."/>
            <person name="Schmoll M."/>
            <person name="Sun J."/>
            <person name="Ussery D."/>
            <person name="Varga J."/>
            <person name="Vervecken W."/>
            <person name="van de Vondervoort P.J.J."/>
            <person name="Wedler H."/>
            <person name="Woesten H.A.B."/>
            <person name="Zeng A.-P."/>
            <person name="van Ooyen A.J.J."/>
            <person name="Visser J."/>
            <person name="Stam H."/>
        </authorList>
    </citation>
    <scope>NUCLEOTIDE SEQUENCE [LARGE SCALE GENOMIC DNA]</scope>
    <source>
        <strain>ATCC MYA-4892 / CBS 513.88 / FGSC A1513</strain>
    </source>
</reference>
<accession>A2QVV2</accession>
<keyword id="KW-1185">Reference proteome</keyword>
<keyword id="KW-0677">Repeat</keyword>
<keyword id="KW-0804">Transcription</keyword>
<keyword id="KW-0805">Transcription regulation</keyword>
<keyword id="KW-0833">Ubl conjugation pathway</keyword>
<keyword id="KW-0853">WD repeat</keyword>
<gene>
    <name type="primary">creC</name>
    <name type="ORF">An11g02750</name>
</gene>
<protein>
    <recommendedName>
        <fullName>Probable catabolite repression protein creC</fullName>
    </recommendedName>
</protein>
<name>CREC_ASPNC</name>
<comment type="function">
    <text evidence="1">Component of the regulatory network controlling carbon source utilization through ubiquitination and deubiquitination involving creA, creB, creC, creD and acrB. Required to prevent the proteolysis of the CreB deubiquitinating enzyme in the absence of carbon catabolite repression. CreB deubiquitinating enzyme stabilized in a complex with the CreC leads to the expression of genes such as those in the proline and quinate pathways (By similarity).</text>
</comment>
<comment type="subunit">
    <text evidence="1">Interacts with creB.</text>
</comment>
<comment type="similarity">
    <text evidence="3">Belongs to the WD repeat creC family.</text>
</comment>
<evidence type="ECO:0000250" key="1"/>
<evidence type="ECO:0000256" key="2">
    <source>
        <dbReference type="SAM" id="MobiDB-lite"/>
    </source>
</evidence>
<evidence type="ECO:0000305" key="3"/>